<name>SPNS1_XENTR</name>
<gene>
    <name type="primary">spns1</name>
</gene>
<evidence type="ECO:0000250" key="1"/>
<evidence type="ECO:0000250" key="2">
    <source>
        <dbReference type="UniProtKB" id="Q7ZU13"/>
    </source>
</evidence>
<evidence type="ECO:0000250" key="3">
    <source>
        <dbReference type="UniProtKB" id="Q9H2V7"/>
    </source>
</evidence>
<evidence type="ECO:0000255" key="4"/>
<evidence type="ECO:0000256" key="5">
    <source>
        <dbReference type="SAM" id="MobiDB-lite"/>
    </source>
</evidence>
<evidence type="ECO:0000303" key="6">
    <source ref="1"/>
</evidence>
<evidence type="ECO:0000305" key="7"/>
<keyword id="KW-0025">Alternative splicing</keyword>
<keyword id="KW-0445">Lipid transport</keyword>
<keyword id="KW-0458">Lysosome</keyword>
<keyword id="KW-0472">Membrane</keyword>
<keyword id="KW-1185">Reference proteome</keyword>
<keyword id="KW-0812">Transmembrane</keyword>
<keyword id="KW-1133">Transmembrane helix</keyword>
<keyword id="KW-0813">Transport</keyword>
<dbReference type="EMBL" id="BC154692">
    <property type="protein sequence ID" value="AAI54693.1"/>
    <property type="molecule type" value="mRNA"/>
</dbReference>
<dbReference type="RefSeq" id="NP_001106495.1">
    <molecule id="A8WGF7-2"/>
    <property type="nucleotide sequence ID" value="NM_001113024.1"/>
</dbReference>
<dbReference type="SMR" id="A8WGF7"/>
<dbReference type="FunCoup" id="A8WGF7">
    <property type="interactions" value="1089"/>
</dbReference>
<dbReference type="STRING" id="8364.ENSXETP00000039612"/>
<dbReference type="PaxDb" id="8364-ENSXETP00000018277"/>
<dbReference type="DNASU" id="100127684"/>
<dbReference type="GeneID" id="100127684"/>
<dbReference type="KEGG" id="xtr:100127684"/>
<dbReference type="CTD" id="83985"/>
<dbReference type="eggNOG" id="KOG1330">
    <property type="taxonomic scope" value="Eukaryota"/>
</dbReference>
<dbReference type="InParanoid" id="A8WGF7"/>
<dbReference type="OrthoDB" id="6770063at2759"/>
<dbReference type="Proteomes" id="UP000008143">
    <property type="component" value="Chromosome 9"/>
</dbReference>
<dbReference type="GO" id="GO:0005765">
    <property type="term" value="C:lysosomal membrane"/>
    <property type="evidence" value="ECO:0007669"/>
    <property type="project" value="UniProtKB-SubCell"/>
</dbReference>
<dbReference type="GO" id="GO:0022857">
    <property type="term" value="F:transmembrane transporter activity"/>
    <property type="evidence" value="ECO:0007669"/>
    <property type="project" value="InterPro"/>
</dbReference>
<dbReference type="GO" id="GO:0006869">
    <property type="term" value="P:lipid transport"/>
    <property type="evidence" value="ECO:0007669"/>
    <property type="project" value="UniProtKB-KW"/>
</dbReference>
<dbReference type="CDD" id="cd17328">
    <property type="entry name" value="MFS_spinster_like"/>
    <property type="match status" value="1"/>
</dbReference>
<dbReference type="Gene3D" id="1.20.1250.20">
    <property type="entry name" value="MFS general substrate transporter like domains"/>
    <property type="match status" value="1"/>
</dbReference>
<dbReference type="InterPro" id="IPR011701">
    <property type="entry name" value="MFS"/>
</dbReference>
<dbReference type="InterPro" id="IPR020846">
    <property type="entry name" value="MFS_dom"/>
</dbReference>
<dbReference type="InterPro" id="IPR044770">
    <property type="entry name" value="MFS_spinster-like"/>
</dbReference>
<dbReference type="InterPro" id="IPR036259">
    <property type="entry name" value="MFS_trans_sf"/>
</dbReference>
<dbReference type="PANTHER" id="PTHR23505:SF13">
    <property type="entry name" value="PROTEIN SPINSTER HOMOLOG 1"/>
    <property type="match status" value="1"/>
</dbReference>
<dbReference type="PANTHER" id="PTHR23505">
    <property type="entry name" value="SPINSTER"/>
    <property type="match status" value="1"/>
</dbReference>
<dbReference type="Pfam" id="PF07690">
    <property type="entry name" value="MFS_1"/>
    <property type="match status" value="1"/>
</dbReference>
<dbReference type="SUPFAM" id="SSF103473">
    <property type="entry name" value="MFS general substrate transporter"/>
    <property type="match status" value="1"/>
</dbReference>
<dbReference type="PROSITE" id="PS50850">
    <property type="entry name" value="MFS"/>
    <property type="match status" value="1"/>
</dbReference>
<sequence>MTSRSSQGDAAPFLTQADNTEEEGAPDPGGHSSDEEEEEGKDHGKEAHLLTGISYRHSVTIVIILFYINLLNYMDRFTVAGVLSDIKEDYHISDSNSGLVQTVFICSYMFLAPVFGYLGDRYNRKLIMCIGISFWSLVTLLSSFVSKQYFWLFLLTRGLVGVGEASYSTIAPTIIADLFLADQRSRMLSFFYFATPVGCGLGYIAGSKVTSTAGDWHWALRVTPGLGLVAVLLLIFVAKEPPRGALERKSDRPLTNTSWFSDVKALLKNPSFILSTFGFTTVAFVTGALALWGPTYLMRSRRVIYKTEPCQGGICNYDDSMIFGGITCVTGVLGVLTGVEISKRYRKTNPRADPLVCAVGMISSAPFLYLSLAFADTSLVATYAFIFIGETLLSLNWALVADILLYVVIPTRRSTAEALQIVVSHLLGDAGSPYLIGVISDQIQKGKAPSFLIQMRSLEYALMICAFVGVIGGGFFLATALFIEKDRKRAELFSQGLLPADETDAERIVVPKRGRSTKVPVSSVLI</sequence>
<comment type="function">
    <text evidence="2 3">Mediates the rate-limiting, proton-dependent, lysosomal efflux of lysophospholipids. Selective for zwitterionic headgroups such as lysophosphatidylcholine (LPC) and lysophosphatidylethanolamine (LPE) (By similarity). Essential player in lysosomal homeostasis (By similarity).</text>
</comment>
<comment type="catalytic activity">
    <reaction evidence="3">
        <text>a 1-acyl-sn-glycero-3-phosphocholine(out) + H(+)(out) = a 1-acyl-sn-glycero-3-phosphocholine(in) + H(+)(in)</text>
        <dbReference type="Rhea" id="RHEA:74435"/>
        <dbReference type="ChEBI" id="CHEBI:15378"/>
        <dbReference type="ChEBI" id="CHEBI:58168"/>
    </reaction>
</comment>
<comment type="catalytic activity">
    <reaction evidence="3">
        <text>a 1-acyl-sn-glycero-3-phosphoethanolamine(out) + H(+)(out) = a 1-acyl-sn-glycero-3-phosphoethanolamine(in) + H(+)(in)</text>
        <dbReference type="Rhea" id="RHEA:74439"/>
        <dbReference type="ChEBI" id="CHEBI:15378"/>
        <dbReference type="ChEBI" id="CHEBI:64381"/>
    </reaction>
</comment>
<comment type="catalytic activity">
    <reaction evidence="3">
        <text>a 1-O-(1Z-alkenyl)-sn-glycero-3-phosphocholine(out) + H(+)(out) = a 1-O-(1Z-alkenyl)-sn-glycero-3-phosphocholine(in) + H(+)(in)</text>
        <dbReference type="Rhea" id="RHEA:74447"/>
        <dbReference type="ChEBI" id="CHEBI:15378"/>
        <dbReference type="ChEBI" id="CHEBI:77287"/>
    </reaction>
</comment>
<comment type="catalytic activity">
    <reaction evidence="3">
        <text>a 1-O-(1Z-alkenyl)-sn-glycero-3-phosphoethanolamine(out) + H(+)(out) = a 1-O-(1Z-alkenyl)-sn-glycero-3-phosphoethanolamine(in) + H(+)(in)</text>
        <dbReference type="Rhea" id="RHEA:74455"/>
        <dbReference type="ChEBI" id="CHEBI:15378"/>
        <dbReference type="ChEBI" id="CHEBI:77288"/>
    </reaction>
</comment>
<comment type="subcellular location">
    <subcellularLocation>
        <location evidence="1">Lysosome membrane</location>
        <topology evidence="1">Multi-pass membrane protein</topology>
    </subcellularLocation>
</comment>
<comment type="alternative products">
    <event type="alternative splicing"/>
    <isoform>
        <id>A8WGF7-1</id>
        <name>1</name>
        <sequence type="displayed"/>
    </isoform>
    <isoform>
        <id>A8WGF7-2</id>
        <name>2</name>
        <sequence type="described" ref="VSP_036365"/>
    </isoform>
</comment>
<comment type="similarity">
    <text evidence="7">Belongs to the major facilitator superfamily. Spinster (TC 2.A.1.49) family.</text>
</comment>
<organism>
    <name type="scientific">Xenopus tropicalis</name>
    <name type="common">Western clawed frog</name>
    <name type="synonym">Silurana tropicalis</name>
    <dbReference type="NCBI Taxonomy" id="8364"/>
    <lineage>
        <taxon>Eukaryota</taxon>
        <taxon>Metazoa</taxon>
        <taxon>Chordata</taxon>
        <taxon>Craniata</taxon>
        <taxon>Vertebrata</taxon>
        <taxon>Euteleostomi</taxon>
        <taxon>Amphibia</taxon>
        <taxon>Batrachia</taxon>
        <taxon>Anura</taxon>
        <taxon>Pipoidea</taxon>
        <taxon>Pipidae</taxon>
        <taxon>Xenopodinae</taxon>
        <taxon>Xenopus</taxon>
        <taxon>Silurana</taxon>
    </lineage>
</organism>
<reference key="1">
    <citation type="submission" date="2007-11" db="EMBL/GenBank/DDBJ databases">
        <authorList>
            <consortium name="NIH - Xenopus Gene Collection (XGC) project"/>
        </authorList>
    </citation>
    <scope>NUCLEOTIDE SEQUENCE [LARGE SCALE MRNA] (ISOFORM 2)</scope>
    <source>
        <tissue>Testis</tissue>
    </source>
</reference>
<accession>A8WGF7</accession>
<protein>
    <recommendedName>
        <fullName>Protein spinster homolog 1</fullName>
    </recommendedName>
    <alternativeName>
        <fullName>Spns1</fullName>
    </alternativeName>
</protein>
<proteinExistence type="evidence at transcript level"/>
<feature type="chain" id="PRO_0000363953" description="Protein spinster homolog 1">
    <location>
        <begin position="1"/>
        <end position="526"/>
    </location>
</feature>
<feature type="transmembrane region" description="Helical" evidence="4">
    <location>
        <begin position="48"/>
        <end position="68"/>
    </location>
</feature>
<feature type="transmembrane region" description="Helical" evidence="4">
    <location>
        <begin position="98"/>
        <end position="118"/>
    </location>
</feature>
<feature type="transmembrane region" description="Helical" evidence="4">
    <location>
        <begin position="126"/>
        <end position="146"/>
    </location>
</feature>
<feature type="transmembrane region" description="Helical" evidence="4">
    <location>
        <begin position="159"/>
        <end position="179"/>
    </location>
</feature>
<feature type="transmembrane region" description="Helical" evidence="4">
    <location>
        <begin position="187"/>
        <end position="207"/>
    </location>
</feature>
<feature type="transmembrane region" description="Helical" evidence="4">
    <location>
        <begin position="218"/>
        <end position="238"/>
    </location>
</feature>
<feature type="transmembrane region" description="Helical" evidence="4">
    <location>
        <begin position="272"/>
        <end position="292"/>
    </location>
</feature>
<feature type="transmembrane region" description="Helical" evidence="4">
    <location>
        <begin position="321"/>
        <end position="341"/>
    </location>
</feature>
<feature type="transmembrane region" description="Helical" evidence="4">
    <location>
        <begin position="355"/>
        <end position="375"/>
    </location>
</feature>
<feature type="transmembrane region" description="Helical" evidence="4">
    <location>
        <begin position="385"/>
        <end position="405"/>
    </location>
</feature>
<feature type="transmembrane region" description="Helical" evidence="4">
    <location>
        <begin position="419"/>
        <end position="439"/>
    </location>
</feature>
<feature type="transmembrane region" description="Helical" evidence="4">
    <location>
        <begin position="463"/>
        <end position="483"/>
    </location>
</feature>
<feature type="region of interest" description="Disordered" evidence="5">
    <location>
        <begin position="1"/>
        <end position="43"/>
    </location>
</feature>
<feature type="splice variant" id="VSP_036365" description="In isoform 2." evidence="6">
    <original>ISDQIQKGKAPSFLIQMRSLEYALMICAFVGVIGGGFFLATALFIEKDRKRAELFSQGLLPADETDAERIVVPKRGRSTKVPVSSVLI</original>
    <variation>VSRGPPAVG</variation>
    <location>
        <begin position="439"/>
        <end position="526"/>
    </location>
</feature>